<reference key="1">
    <citation type="journal article" date="1996" name="Genetics">
        <title>An extragenic suppressor of the mitosis-defective bimD6 mutation of Aspergillus nidulans codes for a chromosome scaffold protein.</title>
        <authorList>
            <person name="Holt C.L."/>
            <person name="May G.S."/>
        </authorList>
    </citation>
    <scope>NUCLEOTIDE SEQUENCE [MRNA]</scope>
    <source>
        <strain>FGSC A4 / ATCC 38163 / CBS 112.46 / NRRL 194 / M139</strain>
    </source>
</reference>
<reference key="2">
    <citation type="journal article" date="2005" name="Nature">
        <title>Sequencing of Aspergillus nidulans and comparative analysis with A. fumigatus and A. oryzae.</title>
        <authorList>
            <person name="Galagan J.E."/>
            <person name="Calvo S.E."/>
            <person name="Cuomo C."/>
            <person name="Ma L.-J."/>
            <person name="Wortman J.R."/>
            <person name="Batzoglou S."/>
            <person name="Lee S.-I."/>
            <person name="Bastuerkmen M."/>
            <person name="Spevak C.C."/>
            <person name="Clutterbuck J."/>
            <person name="Kapitonov V."/>
            <person name="Jurka J."/>
            <person name="Scazzocchio C."/>
            <person name="Farman M.L."/>
            <person name="Butler J."/>
            <person name="Purcell S."/>
            <person name="Harris S."/>
            <person name="Braus G.H."/>
            <person name="Draht O."/>
            <person name="Busch S."/>
            <person name="D'Enfert C."/>
            <person name="Bouchier C."/>
            <person name="Goldman G.H."/>
            <person name="Bell-Pedersen D."/>
            <person name="Griffiths-Jones S."/>
            <person name="Doonan J.H."/>
            <person name="Yu J."/>
            <person name="Vienken K."/>
            <person name="Pain A."/>
            <person name="Freitag M."/>
            <person name="Selker E.U."/>
            <person name="Archer D.B."/>
            <person name="Penalva M.A."/>
            <person name="Oakley B.R."/>
            <person name="Momany M."/>
            <person name="Tanaka T."/>
            <person name="Kumagai T."/>
            <person name="Asai K."/>
            <person name="Machida M."/>
            <person name="Nierman W.C."/>
            <person name="Denning D.W."/>
            <person name="Caddick M.X."/>
            <person name="Hynes M."/>
            <person name="Paoletti M."/>
            <person name="Fischer R."/>
            <person name="Miller B.L."/>
            <person name="Dyer P.S."/>
            <person name="Sachs M.S."/>
            <person name="Osmani S.A."/>
            <person name="Birren B.W."/>
        </authorList>
    </citation>
    <scope>NUCLEOTIDE SEQUENCE [LARGE SCALE GENOMIC DNA]</scope>
    <source>
        <strain>FGSC A4 / ATCC 38163 / CBS 112.46 / NRRL 194 / M139</strain>
    </source>
</reference>
<reference key="3">
    <citation type="journal article" date="2009" name="Fungal Genet. Biol.">
        <title>The 2008 update of the Aspergillus nidulans genome annotation: a community effort.</title>
        <authorList>
            <person name="Wortman J.R."/>
            <person name="Gilsenan J.M."/>
            <person name="Joardar V."/>
            <person name="Deegan J."/>
            <person name="Clutterbuck J."/>
            <person name="Andersen M.R."/>
            <person name="Archer D."/>
            <person name="Bencina M."/>
            <person name="Braus G."/>
            <person name="Coutinho P."/>
            <person name="von Dohren H."/>
            <person name="Doonan J."/>
            <person name="Driessen A.J."/>
            <person name="Durek P."/>
            <person name="Espeso E."/>
            <person name="Fekete E."/>
            <person name="Flipphi M."/>
            <person name="Estrada C.G."/>
            <person name="Geysens S."/>
            <person name="Goldman G."/>
            <person name="de Groot P.W."/>
            <person name="Hansen K."/>
            <person name="Harris S.D."/>
            <person name="Heinekamp T."/>
            <person name="Helmstaedt K."/>
            <person name="Henrissat B."/>
            <person name="Hofmann G."/>
            <person name="Homan T."/>
            <person name="Horio T."/>
            <person name="Horiuchi H."/>
            <person name="James S."/>
            <person name="Jones M."/>
            <person name="Karaffa L."/>
            <person name="Karanyi Z."/>
            <person name="Kato M."/>
            <person name="Keller N."/>
            <person name="Kelly D.E."/>
            <person name="Kiel J.A."/>
            <person name="Kim J.M."/>
            <person name="van der Klei I.J."/>
            <person name="Klis F.M."/>
            <person name="Kovalchuk A."/>
            <person name="Krasevec N."/>
            <person name="Kubicek C.P."/>
            <person name="Liu B."/>
            <person name="Maccabe A."/>
            <person name="Meyer V."/>
            <person name="Mirabito P."/>
            <person name="Miskei M."/>
            <person name="Mos M."/>
            <person name="Mullins J."/>
            <person name="Nelson D.R."/>
            <person name="Nielsen J."/>
            <person name="Oakley B.R."/>
            <person name="Osmani S.A."/>
            <person name="Pakula T."/>
            <person name="Paszewski A."/>
            <person name="Paulsen I."/>
            <person name="Pilsyk S."/>
            <person name="Pocsi I."/>
            <person name="Punt P.J."/>
            <person name="Ram A.F."/>
            <person name="Ren Q."/>
            <person name="Robellet X."/>
            <person name="Robson G."/>
            <person name="Seiboth B."/>
            <person name="van Solingen P."/>
            <person name="Specht T."/>
            <person name="Sun J."/>
            <person name="Taheri-Talesh N."/>
            <person name="Takeshita N."/>
            <person name="Ussery D."/>
            <person name="vanKuyk P.A."/>
            <person name="Visser H."/>
            <person name="van de Vondervoort P.J."/>
            <person name="de Vries R.P."/>
            <person name="Walton J."/>
            <person name="Xiang X."/>
            <person name="Xiong Y."/>
            <person name="Zeng A.P."/>
            <person name="Brandt B.W."/>
            <person name="Cornell M.J."/>
            <person name="van den Hondel C.A."/>
            <person name="Visser J."/>
            <person name="Oliver S.G."/>
            <person name="Turner G."/>
        </authorList>
    </citation>
    <scope>GENOME REANNOTATION</scope>
    <source>
        <strain>FGSC A4 / ATCC 38163 / CBS 112.46 / NRRL 194 / M139</strain>
    </source>
</reference>
<feature type="chain" id="PRO_0000119016" description="Chromosome segregation protein sudA">
    <location>
        <begin position="1"/>
        <end position="1215"/>
    </location>
</feature>
<feature type="domain" description="SMC hinge">
    <location>
        <begin position="538"/>
        <end position="650"/>
    </location>
</feature>
<feature type="region of interest" description="Disordered" evidence="2">
    <location>
        <begin position="313"/>
        <end position="332"/>
    </location>
</feature>
<feature type="region of interest" description="Disordered" evidence="2">
    <location>
        <begin position="654"/>
        <end position="676"/>
    </location>
</feature>
<feature type="coiled-coil region" evidence="1">
    <location>
        <begin position="177"/>
        <end position="522"/>
    </location>
</feature>
<feature type="coiled-coil region" evidence="1">
    <location>
        <begin position="684"/>
        <end position="1091"/>
    </location>
</feature>
<feature type="binding site" evidence="1">
    <location>
        <begin position="32"/>
        <end position="39"/>
    </location>
    <ligand>
        <name>ATP</name>
        <dbReference type="ChEBI" id="CHEBI:30616"/>
    </ligand>
</feature>
<feature type="sequence conflict" description="In Ref. 1; AAB42143." evidence="3" ref="1">
    <location>
        <begin position="257"/>
        <end position="259"/>
    </location>
</feature>
<feature type="sequence conflict" description="In Ref. 1; AAB42143." evidence="3" ref="1">
    <location>
        <position position="440"/>
    </location>
</feature>
<protein>
    <recommendedName>
        <fullName>Chromosome segregation protein sudA</fullName>
    </recommendedName>
    <alternativeName>
        <fullName>DA-box protein sudA</fullName>
    </alternativeName>
</protein>
<gene>
    <name type="primary">sudA</name>
    <name type="ORF">AN6364</name>
</gene>
<comment type="function">
    <text>Involved in chromosome segregation in mitosis.</text>
</comment>
<comment type="subcellular location">
    <subcellularLocation>
        <location evidence="3">Nucleus</location>
    </subcellularLocation>
</comment>
<comment type="similarity">
    <text evidence="3">Belongs to the SMC family. SMC3 subfamily.</text>
</comment>
<accession>Q00737</accession>
<accession>C8V0X5</accession>
<accession>Q5AZB6</accession>
<sequence>MYVKQIIIQGFKSYKDQTVIEPFSPKHNVIVGRNGSGKSNFFAAIRFVLSDAYTHLGREERQALLHEGSGSAVMSAYVEIIFDNSDERFPTGKPELVLRRTIGLKKDEYTLDRKNATKNDVMNLLESAGFSRSNPYYIVPQGRVTALTNMKDSERLNLLKEVAGTQVYEARRAESLKIMHETNSKREKIDELLDFINERLAELEEEKDELRNFQEKDKERRCLEYTIYSREQQEIASFLDSLEEQRQTGVEDTDINRDRFIQGEKEMAQVDAEIAECKQQIEFLKVDKAQLEDERREASKALAQVELQAKSLSDNQAAAQESKARHDESLKAVQSAIEERQTELKELVPRFISAKDAEDAARAKLTEAETARQRLYAKQGRNSRFKNKSERDKWLQAEIKNNNASISSVQSVLSQTQEDINDIENDIALLEPETERLRQQIDGRGDTIQSVEQQVQAAKDERDRLMDQRKYVDWPRTSCATLTIHRELWREEAKLDSILINASNEVDRAERNLSQMMDHNTSRGIAAVRRIKRQHNLEGVYGTLAELFEVNDRYRTAVEVTAGQSLFHYVVDTDDTATKVLEILQHEKAGRVTFMPLNRLRTKPLNMPKASDTIPMIEKLQYDRAYEKAFQHVFGKTIICPNLQVASQYARSHGVNATTPEGDRSDKRGALTGGFHDSRQSRLDAVKNLAKWRDEYETKKSRGSEIRKELEELDQLITRAVGELQKLEQQRHQVQNSSGPLRQELRSKRDLLQKQNDNLDAKRRALRNIEGNLAALKDQVDAFEAELSSPFHKALTDEEEARLESLNSNVQEYRREYQELSGKRSELETRKSVLEVELRENLNPRLDQLLAQDADIADEDGQGNIKETQREQKRLTKVLDKLAQRLAQVDESMEQANSRVTELTQRNAESRRELEELAKSIEKHQRRMEKSMQKKAALTKQAAECAANIRDLGVLPDEAFTKYKNTDSNTVVKKLHKVNEALKKYAHVNKKAFEQYNNFTKQRETLTSRREELDASQKSIDDLISVLDHRKDEAIERTFKQVSREFATIFEKLVPAGRGRLIIQRKTDRTQRAEDDLESEDEEAKHSVENYVGVGISVSFNSKHDDQQRIQQLSGGQKSLCALALVFAIQACDPAPFYLFDEIDANLDAQYRTAVAQMLKTISDSTNGQFICTTFRPEMLHVAEKCYGVSFRQKASTIDVVSREEALKFVEEQKS</sequence>
<evidence type="ECO:0000255" key="1"/>
<evidence type="ECO:0000256" key="2">
    <source>
        <dbReference type="SAM" id="MobiDB-lite"/>
    </source>
</evidence>
<evidence type="ECO:0000305" key="3"/>
<proteinExistence type="evidence at transcript level"/>
<organism>
    <name type="scientific">Emericella nidulans (strain FGSC A4 / ATCC 38163 / CBS 112.46 / NRRL 194 / M139)</name>
    <name type="common">Aspergillus nidulans</name>
    <dbReference type="NCBI Taxonomy" id="227321"/>
    <lineage>
        <taxon>Eukaryota</taxon>
        <taxon>Fungi</taxon>
        <taxon>Dikarya</taxon>
        <taxon>Ascomycota</taxon>
        <taxon>Pezizomycotina</taxon>
        <taxon>Eurotiomycetes</taxon>
        <taxon>Eurotiomycetidae</taxon>
        <taxon>Eurotiales</taxon>
        <taxon>Aspergillaceae</taxon>
        <taxon>Aspergillus</taxon>
        <taxon>Aspergillus subgen. Nidulantes</taxon>
    </lineage>
</organism>
<name>SUDA_EMENI</name>
<keyword id="KW-0067">ATP-binding</keyword>
<keyword id="KW-0131">Cell cycle</keyword>
<keyword id="KW-0132">Cell division</keyword>
<keyword id="KW-0175">Coiled coil</keyword>
<keyword id="KW-0498">Mitosis</keyword>
<keyword id="KW-0547">Nucleotide-binding</keyword>
<keyword id="KW-0539">Nucleus</keyword>
<keyword id="KW-1185">Reference proteome</keyword>
<dbReference type="EMBL" id="U40146">
    <property type="protein sequence ID" value="AAB42143.1"/>
    <property type="molecule type" value="mRNA"/>
</dbReference>
<dbReference type="EMBL" id="AACD01000107">
    <property type="protein sequence ID" value="EAA58748.1"/>
    <property type="molecule type" value="Genomic_DNA"/>
</dbReference>
<dbReference type="EMBL" id="BN001301">
    <property type="protein sequence ID" value="CBF69619.1"/>
    <property type="molecule type" value="Genomic_DNA"/>
</dbReference>
<dbReference type="PIR" id="S65799">
    <property type="entry name" value="S65799"/>
</dbReference>
<dbReference type="RefSeq" id="XP_663968.1">
    <property type="nucleotide sequence ID" value="XM_658876.1"/>
</dbReference>
<dbReference type="SMR" id="Q00737"/>
<dbReference type="FunCoup" id="Q00737">
    <property type="interactions" value="1194"/>
</dbReference>
<dbReference type="STRING" id="227321.Q00737"/>
<dbReference type="EnsemblFungi" id="CBF69619">
    <property type="protein sequence ID" value="CBF69619"/>
    <property type="gene ID" value="ANIA_06364"/>
</dbReference>
<dbReference type="KEGG" id="ani:ANIA_06364"/>
<dbReference type="VEuPathDB" id="FungiDB:AN6364"/>
<dbReference type="eggNOG" id="KOG0964">
    <property type="taxonomic scope" value="Eukaryota"/>
</dbReference>
<dbReference type="HOGENOM" id="CLU_001042_5_0_1"/>
<dbReference type="InParanoid" id="Q00737"/>
<dbReference type="OMA" id="GQKTVCA"/>
<dbReference type="OrthoDB" id="431497at2759"/>
<dbReference type="Proteomes" id="UP000000560">
    <property type="component" value="Chromosome I"/>
</dbReference>
<dbReference type="GO" id="GO:0030892">
    <property type="term" value="C:mitotic cohesin complex"/>
    <property type="evidence" value="ECO:0000318"/>
    <property type="project" value="GO_Central"/>
</dbReference>
<dbReference type="GO" id="GO:0005634">
    <property type="term" value="C:nucleus"/>
    <property type="evidence" value="ECO:0007669"/>
    <property type="project" value="UniProtKB-SubCell"/>
</dbReference>
<dbReference type="GO" id="GO:0005524">
    <property type="term" value="F:ATP binding"/>
    <property type="evidence" value="ECO:0007669"/>
    <property type="project" value="UniProtKB-KW"/>
</dbReference>
<dbReference type="GO" id="GO:0016887">
    <property type="term" value="F:ATP hydrolysis activity"/>
    <property type="evidence" value="ECO:0007669"/>
    <property type="project" value="InterPro"/>
</dbReference>
<dbReference type="GO" id="GO:0003690">
    <property type="term" value="F:double-stranded DNA binding"/>
    <property type="evidence" value="ECO:0000318"/>
    <property type="project" value="GO_Central"/>
</dbReference>
<dbReference type="GO" id="GO:0051301">
    <property type="term" value="P:cell division"/>
    <property type="evidence" value="ECO:0007669"/>
    <property type="project" value="UniProtKB-KW"/>
</dbReference>
<dbReference type="GO" id="GO:0007059">
    <property type="term" value="P:chromosome segregation"/>
    <property type="evidence" value="ECO:0000315"/>
    <property type="project" value="AspGD"/>
</dbReference>
<dbReference type="GO" id="GO:0000278">
    <property type="term" value="P:mitotic cell cycle"/>
    <property type="evidence" value="ECO:0000315"/>
    <property type="project" value="AspGD"/>
</dbReference>
<dbReference type="GO" id="GO:0007064">
    <property type="term" value="P:mitotic sister chromatid cohesion"/>
    <property type="evidence" value="ECO:0000318"/>
    <property type="project" value="GO_Central"/>
</dbReference>
<dbReference type="CDD" id="cd03272">
    <property type="entry name" value="ABC_SMC3_euk"/>
    <property type="match status" value="1"/>
</dbReference>
<dbReference type="FunFam" id="3.30.70.1620:FF:000002">
    <property type="entry name" value="Structural maintenance of chromosomes 3"/>
    <property type="match status" value="1"/>
</dbReference>
<dbReference type="FunFam" id="3.40.50.300:FF:000370">
    <property type="entry name" value="Structural maintenance of chromosomes 3"/>
    <property type="match status" value="1"/>
</dbReference>
<dbReference type="FunFam" id="3.40.50.300:FF:000424">
    <property type="entry name" value="Structural maintenance of chromosomes 3"/>
    <property type="match status" value="1"/>
</dbReference>
<dbReference type="Gene3D" id="1.20.1060.20">
    <property type="match status" value="1"/>
</dbReference>
<dbReference type="Gene3D" id="3.30.70.1620">
    <property type="match status" value="1"/>
</dbReference>
<dbReference type="Gene3D" id="3.40.50.300">
    <property type="entry name" value="P-loop containing nucleotide triphosphate hydrolases"/>
    <property type="match status" value="2"/>
</dbReference>
<dbReference type="InterPro" id="IPR027417">
    <property type="entry name" value="P-loop_NTPase"/>
</dbReference>
<dbReference type="InterPro" id="IPR003395">
    <property type="entry name" value="RecF/RecN/SMC_N"/>
</dbReference>
<dbReference type="InterPro" id="IPR024704">
    <property type="entry name" value="SMC"/>
</dbReference>
<dbReference type="InterPro" id="IPR041741">
    <property type="entry name" value="SMC3_ABC_euk"/>
</dbReference>
<dbReference type="InterPro" id="IPR010935">
    <property type="entry name" value="SMC_hinge"/>
</dbReference>
<dbReference type="InterPro" id="IPR036277">
    <property type="entry name" value="SMC_hinge_sf"/>
</dbReference>
<dbReference type="PANTHER" id="PTHR43977">
    <property type="entry name" value="STRUCTURAL MAINTENANCE OF CHROMOSOMES PROTEIN 3"/>
    <property type="match status" value="1"/>
</dbReference>
<dbReference type="Pfam" id="PF06470">
    <property type="entry name" value="SMC_hinge"/>
    <property type="match status" value="1"/>
</dbReference>
<dbReference type="Pfam" id="PF02463">
    <property type="entry name" value="SMC_N"/>
    <property type="match status" value="1"/>
</dbReference>
<dbReference type="PIRSF" id="PIRSF005719">
    <property type="entry name" value="SMC"/>
    <property type="match status" value="1"/>
</dbReference>
<dbReference type="SMART" id="SM00968">
    <property type="entry name" value="SMC_hinge"/>
    <property type="match status" value="1"/>
</dbReference>
<dbReference type="SUPFAM" id="SSF52540">
    <property type="entry name" value="P-loop containing nucleoside triphosphate hydrolases"/>
    <property type="match status" value="1"/>
</dbReference>
<dbReference type="SUPFAM" id="SSF75553">
    <property type="entry name" value="Smc hinge domain"/>
    <property type="match status" value="1"/>
</dbReference>